<keyword id="KW-0007">Acetylation</keyword>
<keyword id="KW-0963">Cytoplasm</keyword>
<keyword id="KW-0597">Phosphoprotein</keyword>
<keyword id="KW-1185">Reference proteome</keyword>
<organism>
    <name type="scientific">Mus musculus</name>
    <name type="common">Mouse</name>
    <dbReference type="NCBI Taxonomy" id="10090"/>
    <lineage>
        <taxon>Eukaryota</taxon>
        <taxon>Metazoa</taxon>
        <taxon>Chordata</taxon>
        <taxon>Craniata</taxon>
        <taxon>Vertebrata</taxon>
        <taxon>Euteleostomi</taxon>
        <taxon>Mammalia</taxon>
        <taxon>Eutheria</taxon>
        <taxon>Euarchontoglires</taxon>
        <taxon>Glires</taxon>
        <taxon>Rodentia</taxon>
        <taxon>Myomorpha</taxon>
        <taxon>Muroidea</taxon>
        <taxon>Muridae</taxon>
        <taxon>Murinae</taxon>
        <taxon>Mus</taxon>
        <taxon>Mus</taxon>
    </lineage>
</organism>
<sequence>MASMAAAIAASRSAVMSGNRPLDDRERKRFTYFSSLSPMARKIMQDKEKIREKYGPEWARLPPAQQDEIIDRCLVGPRAPAAAADAGDVRDPARFPGLRGPTGQKLVRFGDEDITWQDEHSAPFSWETRSQMEFSISSLSIQEPSAATVTSDARSLAKAPQGTQGSKPAQSSRSSSLDALGPARKEEEAPFWKINAERSREGPEAEFQSLTPSQIKSMEKGEKVLPACYRQEPTTKDREAKPVPQEQQTLPSVSAEQEVPQPVQAPASLLPKATPTESPEKPPPPAVQRDEDDDALFSEPALAQISSSNVLLKTGFDFLDNW</sequence>
<feature type="initiator methionine" description="Removed" evidence="2">
    <location>
        <position position="1"/>
    </location>
</feature>
<feature type="chain" id="PRO_0000280343" description="Uncharacterized protein C1orf198 homolog">
    <location>
        <begin position="2"/>
        <end position="322"/>
    </location>
</feature>
<feature type="region of interest" description="Disordered" evidence="3">
    <location>
        <begin position="1"/>
        <end position="22"/>
    </location>
</feature>
<feature type="region of interest" description="Disordered" evidence="3">
    <location>
        <begin position="81"/>
        <end position="104"/>
    </location>
</feature>
<feature type="region of interest" description="Disordered" evidence="3">
    <location>
        <begin position="142"/>
        <end position="301"/>
    </location>
</feature>
<feature type="compositionally biased region" description="Low complexity" evidence="3">
    <location>
        <begin position="1"/>
        <end position="17"/>
    </location>
</feature>
<feature type="compositionally biased region" description="Polar residues" evidence="3">
    <location>
        <begin position="142"/>
        <end position="153"/>
    </location>
</feature>
<feature type="compositionally biased region" description="Polar residues" evidence="3">
    <location>
        <begin position="161"/>
        <end position="177"/>
    </location>
</feature>
<feature type="compositionally biased region" description="Basic and acidic residues" evidence="3">
    <location>
        <begin position="183"/>
        <end position="203"/>
    </location>
</feature>
<feature type="compositionally biased region" description="Polar residues" evidence="3">
    <location>
        <begin position="245"/>
        <end position="255"/>
    </location>
</feature>
<feature type="modified residue" description="N-acetylalanine" evidence="2">
    <location>
        <position position="2"/>
    </location>
</feature>
<feature type="modified residue" description="Phosphoserine" evidence="2">
    <location>
        <position position="37"/>
    </location>
</feature>
<feature type="modified residue" description="Phosphoserine" evidence="5">
    <location>
        <position position="130"/>
    </location>
</feature>
<feature type="modified residue" description="Phosphoserine" evidence="2">
    <location>
        <position position="176"/>
    </location>
</feature>
<feature type="sequence conflict" description="In Ref. 2; AAH58626." evidence="4" ref="2">
    <original>E</original>
    <variation>D</variation>
    <location>
        <position position="52"/>
    </location>
</feature>
<feature type="sequence conflict" description="In Ref. 1; BAE33133." evidence="4" ref="1">
    <original>R</original>
    <variation>H</variation>
    <location>
        <position position="78"/>
    </location>
</feature>
<feature type="sequence conflict" description="In Ref. 1; BAE32847." evidence="4" ref="1">
    <original>D</original>
    <variation>E</variation>
    <location>
        <position position="85"/>
    </location>
</feature>
<comment type="subcellular location">
    <subcellularLocation>
        <location evidence="1">Cytoplasm</location>
    </subcellularLocation>
</comment>
<accession>Q8C3W1</accession>
<accession>Q3TCS2</accession>
<accession>Q3U2K7</accession>
<accession>Q3U3E1</accession>
<accession>Q6PDM3</accession>
<reference key="1">
    <citation type="journal article" date="2005" name="Science">
        <title>The transcriptional landscape of the mammalian genome.</title>
        <authorList>
            <person name="Carninci P."/>
            <person name="Kasukawa T."/>
            <person name="Katayama S."/>
            <person name="Gough J."/>
            <person name="Frith M.C."/>
            <person name="Maeda N."/>
            <person name="Oyama R."/>
            <person name="Ravasi T."/>
            <person name="Lenhard B."/>
            <person name="Wells C."/>
            <person name="Kodzius R."/>
            <person name="Shimokawa K."/>
            <person name="Bajic V.B."/>
            <person name="Brenner S.E."/>
            <person name="Batalov S."/>
            <person name="Forrest A.R."/>
            <person name="Zavolan M."/>
            <person name="Davis M.J."/>
            <person name="Wilming L.G."/>
            <person name="Aidinis V."/>
            <person name="Allen J.E."/>
            <person name="Ambesi-Impiombato A."/>
            <person name="Apweiler R."/>
            <person name="Aturaliya R.N."/>
            <person name="Bailey T.L."/>
            <person name="Bansal M."/>
            <person name="Baxter L."/>
            <person name="Beisel K.W."/>
            <person name="Bersano T."/>
            <person name="Bono H."/>
            <person name="Chalk A.M."/>
            <person name="Chiu K.P."/>
            <person name="Choudhary V."/>
            <person name="Christoffels A."/>
            <person name="Clutterbuck D.R."/>
            <person name="Crowe M.L."/>
            <person name="Dalla E."/>
            <person name="Dalrymple B.P."/>
            <person name="de Bono B."/>
            <person name="Della Gatta G."/>
            <person name="di Bernardo D."/>
            <person name="Down T."/>
            <person name="Engstrom P."/>
            <person name="Fagiolini M."/>
            <person name="Faulkner G."/>
            <person name="Fletcher C.F."/>
            <person name="Fukushima T."/>
            <person name="Furuno M."/>
            <person name="Futaki S."/>
            <person name="Gariboldi M."/>
            <person name="Georgii-Hemming P."/>
            <person name="Gingeras T.R."/>
            <person name="Gojobori T."/>
            <person name="Green R.E."/>
            <person name="Gustincich S."/>
            <person name="Harbers M."/>
            <person name="Hayashi Y."/>
            <person name="Hensch T.K."/>
            <person name="Hirokawa N."/>
            <person name="Hill D."/>
            <person name="Huminiecki L."/>
            <person name="Iacono M."/>
            <person name="Ikeo K."/>
            <person name="Iwama A."/>
            <person name="Ishikawa T."/>
            <person name="Jakt M."/>
            <person name="Kanapin A."/>
            <person name="Katoh M."/>
            <person name="Kawasawa Y."/>
            <person name="Kelso J."/>
            <person name="Kitamura H."/>
            <person name="Kitano H."/>
            <person name="Kollias G."/>
            <person name="Krishnan S.P."/>
            <person name="Kruger A."/>
            <person name="Kummerfeld S.K."/>
            <person name="Kurochkin I.V."/>
            <person name="Lareau L.F."/>
            <person name="Lazarevic D."/>
            <person name="Lipovich L."/>
            <person name="Liu J."/>
            <person name="Liuni S."/>
            <person name="McWilliam S."/>
            <person name="Madan Babu M."/>
            <person name="Madera M."/>
            <person name="Marchionni L."/>
            <person name="Matsuda H."/>
            <person name="Matsuzawa S."/>
            <person name="Miki H."/>
            <person name="Mignone F."/>
            <person name="Miyake S."/>
            <person name="Morris K."/>
            <person name="Mottagui-Tabar S."/>
            <person name="Mulder N."/>
            <person name="Nakano N."/>
            <person name="Nakauchi H."/>
            <person name="Ng P."/>
            <person name="Nilsson R."/>
            <person name="Nishiguchi S."/>
            <person name="Nishikawa S."/>
            <person name="Nori F."/>
            <person name="Ohara O."/>
            <person name="Okazaki Y."/>
            <person name="Orlando V."/>
            <person name="Pang K.C."/>
            <person name="Pavan W.J."/>
            <person name="Pavesi G."/>
            <person name="Pesole G."/>
            <person name="Petrovsky N."/>
            <person name="Piazza S."/>
            <person name="Reed J."/>
            <person name="Reid J.F."/>
            <person name="Ring B.Z."/>
            <person name="Ringwald M."/>
            <person name="Rost B."/>
            <person name="Ruan Y."/>
            <person name="Salzberg S.L."/>
            <person name="Sandelin A."/>
            <person name="Schneider C."/>
            <person name="Schoenbach C."/>
            <person name="Sekiguchi K."/>
            <person name="Semple C.A."/>
            <person name="Seno S."/>
            <person name="Sessa L."/>
            <person name="Sheng Y."/>
            <person name="Shibata Y."/>
            <person name="Shimada H."/>
            <person name="Shimada K."/>
            <person name="Silva D."/>
            <person name="Sinclair B."/>
            <person name="Sperling S."/>
            <person name="Stupka E."/>
            <person name="Sugiura K."/>
            <person name="Sultana R."/>
            <person name="Takenaka Y."/>
            <person name="Taki K."/>
            <person name="Tammoja K."/>
            <person name="Tan S.L."/>
            <person name="Tang S."/>
            <person name="Taylor M.S."/>
            <person name="Tegner J."/>
            <person name="Teichmann S.A."/>
            <person name="Ueda H.R."/>
            <person name="van Nimwegen E."/>
            <person name="Verardo R."/>
            <person name="Wei C.L."/>
            <person name="Yagi K."/>
            <person name="Yamanishi H."/>
            <person name="Zabarovsky E."/>
            <person name="Zhu S."/>
            <person name="Zimmer A."/>
            <person name="Hide W."/>
            <person name="Bult C."/>
            <person name="Grimmond S.M."/>
            <person name="Teasdale R.D."/>
            <person name="Liu E.T."/>
            <person name="Brusic V."/>
            <person name="Quackenbush J."/>
            <person name="Wahlestedt C."/>
            <person name="Mattick J.S."/>
            <person name="Hume D.A."/>
            <person name="Kai C."/>
            <person name="Sasaki D."/>
            <person name="Tomaru Y."/>
            <person name="Fukuda S."/>
            <person name="Kanamori-Katayama M."/>
            <person name="Suzuki M."/>
            <person name="Aoki J."/>
            <person name="Arakawa T."/>
            <person name="Iida J."/>
            <person name="Imamura K."/>
            <person name="Itoh M."/>
            <person name="Kato T."/>
            <person name="Kawaji H."/>
            <person name="Kawagashira N."/>
            <person name="Kawashima T."/>
            <person name="Kojima M."/>
            <person name="Kondo S."/>
            <person name="Konno H."/>
            <person name="Nakano K."/>
            <person name="Ninomiya N."/>
            <person name="Nishio T."/>
            <person name="Okada M."/>
            <person name="Plessy C."/>
            <person name="Shibata K."/>
            <person name="Shiraki T."/>
            <person name="Suzuki S."/>
            <person name="Tagami M."/>
            <person name="Waki K."/>
            <person name="Watahiki A."/>
            <person name="Okamura-Oho Y."/>
            <person name="Suzuki H."/>
            <person name="Kawai J."/>
            <person name="Hayashizaki Y."/>
        </authorList>
    </citation>
    <scope>NUCLEOTIDE SEQUENCE [LARGE SCALE MRNA]</scope>
    <source>
        <strain>C57BL/6J</strain>
        <strain>NOD</strain>
        <tissue>Heart</tissue>
    </source>
</reference>
<reference key="2">
    <citation type="journal article" date="2004" name="Genome Res.">
        <title>The status, quality, and expansion of the NIH full-length cDNA project: the Mammalian Gene Collection (MGC).</title>
        <authorList>
            <consortium name="The MGC Project Team"/>
        </authorList>
    </citation>
    <scope>NUCLEOTIDE SEQUENCE [LARGE SCALE MRNA]</scope>
    <source>
        <strain>C57BL/6J</strain>
    </source>
</reference>
<reference key="3">
    <citation type="journal article" date="2010" name="Cell">
        <title>A tissue-specific atlas of mouse protein phosphorylation and expression.</title>
        <authorList>
            <person name="Huttlin E.L."/>
            <person name="Jedrychowski M.P."/>
            <person name="Elias J.E."/>
            <person name="Goswami T."/>
            <person name="Rad R."/>
            <person name="Beausoleil S.A."/>
            <person name="Villen J."/>
            <person name="Haas W."/>
            <person name="Sowa M.E."/>
            <person name="Gygi S.P."/>
        </authorList>
    </citation>
    <scope>PHOSPHORYLATION [LARGE SCALE ANALYSIS] AT SER-130</scope>
    <scope>IDENTIFICATION BY MASS SPECTROMETRY [LARGE SCALE ANALYSIS]</scope>
    <source>
        <tissue>Brain</tissue>
        <tissue>Kidney</tissue>
        <tissue>Liver</tissue>
        <tissue>Lung</tissue>
        <tissue>Spleen</tissue>
        <tissue>Testis</tissue>
    </source>
</reference>
<protein>
    <recommendedName>
        <fullName>Uncharacterized protein C1orf198 homolog</fullName>
    </recommendedName>
</protein>
<dbReference type="EMBL" id="AK084773">
    <property type="protein sequence ID" value="BAC39275.1"/>
    <property type="molecule type" value="mRNA"/>
</dbReference>
<dbReference type="EMBL" id="AK154813">
    <property type="protein sequence ID" value="BAE32847.1"/>
    <property type="molecule type" value="mRNA"/>
</dbReference>
<dbReference type="EMBL" id="AK155222">
    <property type="protein sequence ID" value="BAE33133.1"/>
    <property type="molecule type" value="mRNA"/>
</dbReference>
<dbReference type="EMBL" id="AK170562">
    <property type="protein sequence ID" value="BAE41883.1"/>
    <property type="molecule type" value="mRNA"/>
</dbReference>
<dbReference type="EMBL" id="BC058626">
    <property type="protein sequence ID" value="AAH58626.1"/>
    <property type="molecule type" value="mRNA"/>
</dbReference>
<dbReference type="CCDS" id="CCDS22773.1"/>
<dbReference type="RefSeq" id="NP_780358.3">
    <property type="nucleotide sequence ID" value="NM_175149.4"/>
</dbReference>
<dbReference type="SMR" id="Q8C3W1"/>
<dbReference type="BioGRID" id="213525">
    <property type="interactions" value="3"/>
</dbReference>
<dbReference type="FunCoup" id="Q8C3W1">
    <property type="interactions" value="507"/>
</dbReference>
<dbReference type="IntAct" id="Q8C3W1">
    <property type="interactions" value="1"/>
</dbReference>
<dbReference type="MINT" id="Q8C3W1"/>
<dbReference type="STRING" id="10090.ENSMUSP00000034464"/>
<dbReference type="GlyGen" id="Q8C3W1">
    <property type="glycosylation" value="1 site, 1 O-linked glycan (1 site)"/>
</dbReference>
<dbReference type="iPTMnet" id="Q8C3W1"/>
<dbReference type="PhosphoSitePlus" id="Q8C3W1"/>
<dbReference type="SwissPalm" id="Q8C3W1"/>
<dbReference type="PaxDb" id="10090-ENSMUSP00000034464"/>
<dbReference type="PeptideAtlas" id="Q8C3W1"/>
<dbReference type="Pumba" id="Q8C3W1"/>
<dbReference type="Antibodypedia" id="1577">
    <property type="antibodies" value="55 antibodies from 14 providers"/>
</dbReference>
<dbReference type="DNASU" id="69551"/>
<dbReference type="Ensembl" id="ENSMUST00000034464.8">
    <property type="protein sequence ID" value="ENSMUSP00000034464.7"/>
    <property type="gene ID" value="ENSMUSG00000031983.8"/>
</dbReference>
<dbReference type="GeneID" id="69551"/>
<dbReference type="KEGG" id="mmu:69551"/>
<dbReference type="UCSC" id="uc009nxg.1">
    <property type="organism name" value="mouse"/>
</dbReference>
<dbReference type="AGR" id="MGI:1916801"/>
<dbReference type="MGI" id="MGI:1916801">
    <property type="gene designation" value="2310022B05Rik"/>
</dbReference>
<dbReference type="VEuPathDB" id="HostDB:ENSMUSG00000031983"/>
<dbReference type="eggNOG" id="ENOG502R926">
    <property type="taxonomic scope" value="Eukaryota"/>
</dbReference>
<dbReference type="GeneTree" id="ENSGT00390000018361"/>
<dbReference type="HOGENOM" id="CLU_069832_0_0_1"/>
<dbReference type="InParanoid" id="Q8C3W1"/>
<dbReference type="OMA" id="EQSEFHS"/>
<dbReference type="OrthoDB" id="5984457at2759"/>
<dbReference type="PhylomeDB" id="Q8C3W1"/>
<dbReference type="TreeFam" id="TF334642"/>
<dbReference type="BioGRID-ORCS" id="69551">
    <property type="hits" value="3 hits in 76 CRISPR screens"/>
</dbReference>
<dbReference type="CD-CODE" id="CE726F99">
    <property type="entry name" value="Postsynaptic density"/>
</dbReference>
<dbReference type="PRO" id="PR:Q8C3W1"/>
<dbReference type="Proteomes" id="UP000000589">
    <property type="component" value="Chromosome 8"/>
</dbReference>
<dbReference type="RNAct" id="Q8C3W1">
    <property type="molecule type" value="protein"/>
</dbReference>
<dbReference type="Bgee" id="ENSMUSG00000031983">
    <property type="expression patterns" value="Expressed in otolith organ and 231 other cell types or tissues"/>
</dbReference>
<dbReference type="GO" id="GO:0005829">
    <property type="term" value="C:cytosol"/>
    <property type="evidence" value="ECO:0007669"/>
    <property type="project" value="Ensembl"/>
</dbReference>
<dbReference type="InterPro" id="IPR031600">
    <property type="entry name" value="DUF4706"/>
</dbReference>
<dbReference type="PANTHER" id="PTHR34394">
    <property type="entry name" value="SIMILAR TO RIKEN CDNA 2310022B05"/>
    <property type="match status" value="1"/>
</dbReference>
<dbReference type="PANTHER" id="PTHR34394:SF1">
    <property type="entry name" value="SIMILAR TO RIKEN CDNA 2310022B05"/>
    <property type="match status" value="1"/>
</dbReference>
<dbReference type="Pfam" id="PF15797">
    <property type="entry name" value="DUF4706"/>
    <property type="match status" value="1"/>
</dbReference>
<proteinExistence type="evidence at protein level"/>
<name>CA198_MOUSE</name>
<evidence type="ECO:0000250" key="1"/>
<evidence type="ECO:0000250" key="2">
    <source>
        <dbReference type="UniProtKB" id="Q9H425"/>
    </source>
</evidence>
<evidence type="ECO:0000256" key="3">
    <source>
        <dbReference type="SAM" id="MobiDB-lite"/>
    </source>
</evidence>
<evidence type="ECO:0000305" key="4"/>
<evidence type="ECO:0007744" key="5">
    <source>
    </source>
</evidence>